<comment type="function">
    <text evidence="2">Component of the ubiquinol-cytochrome c reductase complex (complex III or cytochrome b-c1 complex) that is part of the mitochondrial respiratory chain. The b-c1 complex mediates electron transfer from ubiquinol to cytochrome c. Contributes to the generation of a proton gradient across the mitochondrial membrane that is then used for ATP synthesis.</text>
</comment>
<comment type="cofactor">
    <cofactor evidence="2">
        <name>heme b</name>
        <dbReference type="ChEBI" id="CHEBI:60344"/>
    </cofactor>
    <text evidence="2">Binds 2 heme b groups non-covalently.</text>
</comment>
<comment type="subunit">
    <text evidence="2">The cytochrome bc1 complex contains 11 subunits: 3 respiratory subunits (MT-CYB, CYC1 and UQCRFS1), 2 core proteins (UQCRC1 and UQCRC2) and 6 low-molecular weight proteins (UQCRH/QCR6, UQCRB/QCR7, UQCRQ/QCR8, UQCR10/QCR9, UQCR11/QCR10 and a cleavage product of UQCRFS1). This cytochrome bc1 complex then forms a dimer.</text>
</comment>
<comment type="subcellular location">
    <subcellularLocation>
        <location evidence="2">Mitochondrion inner membrane</location>
        <topology evidence="2">Multi-pass membrane protein</topology>
    </subcellularLocation>
</comment>
<comment type="miscellaneous">
    <text evidence="1">Heme 1 (or BL or b562) is low-potential and absorbs at about 562 nm, and heme 2 (or BH or b566) is high-potential and absorbs at about 566 nm.</text>
</comment>
<comment type="similarity">
    <text evidence="3 4">Belongs to the cytochrome b family.</text>
</comment>
<comment type="caution">
    <text evidence="2">The full-length protein contains only eight transmembrane helices, not nine as predicted by bioinformatics tools.</text>
</comment>
<evidence type="ECO:0000250" key="1"/>
<evidence type="ECO:0000250" key="2">
    <source>
        <dbReference type="UniProtKB" id="P00157"/>
    </source>
</evidence>
<evidence type="ECO:0000255" key="3">
    <source>
        <dbReference type="PROSITE-ProRule" id="PRU00967"/>
    </source>
</evidence>
<evidence type="ECO:0000255" key="4">
    <source>
        <dbReference type="PROSITE-ProRule" id="PRU00968"/>
    </source>
</evidence>
<proteinExistence type="inferred from homology"/>
<accession>Q9G1R4</accession>
<accession>Q9G4P6</accession>
<accession>Q9G4P8</accession>
<accession>Q9G4P9</accession>
<keyword id="KW-0249">Electron transport</keyword>
<keyword id="KW-0349">Heme</keyword>
<keyword id="KW-0408">Iron</keyword>
<keyword id="KW-0472">Membrane</keyword>
<keyword id="KW-0479">Metal-binding</keyword>
<keyword id="KW-0496">Mitochondrion</keyword>
<keyword id="KW-0999">Mitochondrion inner membrane</keyword>
<keyword id="KW-0679">Respiratory chain</keyword>
<keyword id="KW-0812">Transmembrane</keyword>
<keyword id="KW-1133">Transmembrane helix</keyword>
<keyword id="KW-0813">Transport</keyword>
<keyword id="KW-0830">Ubiquinone</keyword>
<gene>
    <name type="primary">MT-CYB</name>
    <name type="synonym">COB</name>
    <name type="synonym">CYTB</name>
    <name type="synonym">MTCYB</name>
</gene>
<feature type="chain" id="PRO_0000060793" description="Cytochrome b">
    <location>
        <begin position="1"/>
        <end position="380"/>
    </location>
</feature>
<feature type="transmembrane region" description="Helical" evidence="2">
    <location>
        <begin position="33"/>
        <end position="53"/>
    </location>
</feature>
<feature type="transmembrane region" description="Helical" evidence="2">
    <location>
        <begin position="77"/>
        <end position="98"/>
    </location>
</feature>
<feature type="transmembrane region" description="Helical" evidence="2">
    <location>
        <begin position="113"/>
        <end position="133"/>
    </location>
</feature>
<feature type="transmembrane region" description="Helical" evidence="2">
    <location>
        <begin position="178"/>
        <end position="198"/>
    </location>
</feature>
<feature type="transmembrane region" description="Helical" evidence="2">
    <location>
        <begin position="226"/>
        <end position="246"/>
    </location>
</feature>
<feature type="transmembrane region" description="Helical" evidence="2">
    <location>
        <begin position="288"/>
        <end position="308"/>
    </location>
</feature>
<feature type="transmembrane region" description="Helical" evidence="2">
    <location>
        <begin position="320"/>
        <end position="340"/>
    </location>
</feature>
<feature type="transmembrane region" description="Helical" evidence="2">
    <location>
        <begin position="347"/>
        <end position="367"/>
    </location>
</feature>
<feature type="binding site" description="axial binding residue" evidence="2">
    <location>
        <position position="83"/>
    </location>
    <ligand>
        <name>heme b</name>
        <dbReference type="ChEBI" id="CHEBI:60344"/>
        <label>b562</label>
    </ligand>
    <ligandPart>
        <name>Fe</name>
        <dbReference type="ChEBI" id="CHEBI:18248"/>
    </ligandPart>
</feature>
<feature type="binding site" description="axial binding residue" evidence="2">
    <location>
        <position position="97"/>
    </location>
    <ligand>
        <name>heme b</name>
        <dbReference type="ChEBI" id="CHEBI:60344"/>
        <label>b566</label>
    </ligand>
    <ligandPart>
        <name>Fe</name>
        <dbReference type="ChEBI" id="CHEBI:18248"/>
    </ligandPart>
</feature>
<feature type="binding site" description="axial binding residue" evidence="2">
    <location>
        <position position="182"/>
    </location>
    <ligand>
        <name>heme b</name>
        <dbReference type="ChEBI" id="CHEBI:60344"/>
        <label>b562</label>
    </ligand>
    <ligandPart>
        <name>Fe</name>
        <dbReference type="ChEBI" id="CHEBI:18248"/>
    </ligandPart>
</feature>
<feature type="binding site" description="axial binding residue" evidence="2">
    <location>
        <position position="196"/>
    </location>
    <ligand>
        <name>heme b</name>
        <dbReference type="ChEBI" id="CHEBI:60344"/>
        <label>b566</label>
    </ligand>
    <ligandPart>
        <name>Fe</name>
        <dbReference type="ChEBI" id="CHEBI:18248"/>
    </ligandPart>
</feature>
<feature type="binding site" evidence="2">
    <location>
        <position position="201"/>
    </location>
    <ligand>
        <name>a ubiquinone</name>
        <dbReference type="ChEBI" id="CHEBI:16389"/>
    </ligand>
</feature>
<feature type="sequence variant" description="In strain: Isolate AF 3221.">
    <original>I</original>
    <variation>M</variation>
    <location>
        <position position="11"/>
    </location>
</feature>
<feature type="sequence variant" description="In strain: Isolate AF 2664.">
    <original>S</original>
    <variation>A</variation>
    <location>
        <position position="17"/>
    </location>
</feature>
<feature type="sequence variant" description="In strain: Isolate AF 3221.">
    <original>A</original>
    <variation>T</variation>
    <location>
        <position position="23"/>
    </location>
</feature>
<feature type="sequence variant" description="In strain: Isolate AF 2664.">
    <original>C</original>
    <variation>W</variation>
    <location>
        <position position="40"/>
    </location>
</feature>
<feature type="sequence variant" description="In strain: Isolate AF 3221.">
    <original>I</original>
    <variation>A</variation>
    <location>
        <position position="42"/>
    </location>
</feature>
<feature type="sequence variant" description="In strain: Isolate AF 2664.">
    <original>I</original>
    <variation>T</variation>
    <location>
        <position position="42"/>
    </location>
</feature>
<feature type="sequence variant" description="In strain: Isolate AF 3221.">
    <original>M</original>
    <variation>T</variation>
    <location>
        <position position="237"/>
    </location>
</feature>
<feature type="sequence variant" description="In strain: Isolate AF 4995.">
    <original>N</original>
    <variation>S</variation>
    <location>
        <position position="286"/>
    </location>
</feature>
<feature type="sequence variant" description="In strain: Isolate AF 2664 and Isolate AF 3221.">
    <original>V</original>
    <variation>I</variation>
    <location>
        <position position="300"/>
    </location>
</feature>
<feature type="sequence variant" description="In strain: Isolate AF 3221.">
    <original>I</original>
    <variation>V</variation>
    <location>
        <position position="349"/>
    </location>
</feature>
<feature type="sequence variant" description="In strain: Isolate AF 2664 and Isolate AF 3221.">
    <original>T</original>
    <variation>A</variation>
    <location>
        <position position="360"/>
    </location>
</feature>
<feature type="sequence variant" description="In strain: Isolate AF 2664 and Isolate AF 3221.">
    <original>I</original>
    <variation>V</variation>
    <location>
        <position position="363"/>
    </location>
</feature>
<feature type="sequence variant" description="In strain: Isolate AF 2664.">
    <original>L</original>
    <variation>F</variation>
    <location>
        <position position="365"/>
    </location>
</feature>
<feature type="sequence variant" description="In strain: Isolate AF 3221.">
    <original>N</original>
    <variation>S</variation>
    <location>
        <position position="375"/>
    </location>
</feature>
<feature type="sequence variant" description="In strain: Isolate AF 3221.">
    <original>D</original>
    <variation>G</variation>
    <location>
        <position position="378"/>
    </location>
</feature>
<dbReference type="EMBL" id="AF272633">
    <property type="protein sequence ID" value="AAG44805.1"/>
    <property type="molecule type" value="Genomic_DNA"/>
</dbReference>
<dbReference type="EMBL" id="AF272634">
    <property type="protein sequence ID" value="AAG44806.1"/>
    <property type="molecule type" value="Genomic_DNA"/>
</dbReference>
<dbReference type="EMBL" id="AF272635">
    <property type="protein sequence ID" value="AAG44807.1"/>
    <property type="molecule type" value="Genomic_DNA"/>
</dbReference>
<dbReference type="EMBL" id="AF272636">
    <property type="protein sequence ID" value="AAG44808.1"/>
    <property type="molecule type" value="Genomic_DNA"/>
</dbReference>
<dbReference type="EMBL" id="AF272637">
    <property type="protein sequence ID" value="AAG44809.1"/>
    <property type="molecule type" value="Genomic_DNA"/>
</dbReference>
<dbReference type="EMBL" id="AF272639">
    <property type="protein sequence ID" value="AAG44811.1"/>
    <property type="molecule type" value="Genomic_DNA"/>
</dbReference>
<dbReference type="SMR" id="Q9G1R4"/>
<dbReference type="GO" id="GO:0005743">
    <property type="term" value="C:mitochondrial inner membrane"/>
    <property type="evidence" value="ECO:0007669"/>
    <property type="project" value="UniProtKB-SubCell"/>
</dbReference>
<dbReference type="GO" id="GO:0045275">
    <property type="term" value="C:respiratory chain complex III"/>
    <property type="evidence" value="ECO:0007669"/>
    <property type="project" value="InterPro"/>
</dbReference>
<dbReference type="GO" id="GO:0046872">
    <property type="term" value="F:metal ion binding"/>
    <property type="evidence" value="ECO:0007669"/>
    <property type="project" value="UniProtKB-KW"/>
</dbReference>
<dbReference type="GO" id="GO:0008121">
    <property type="term" value="F:ubiquinol-cytochrome-c reductase activity"/>
    <property type="evidence" value="ECO:0007669"/>
    <property type="project" value="InterPro"/>
</dbReference>
<dbReference type="GO" id="GO:0006122">
    <property type="term" value="P:mitochondrial electron transport, ubiquinol to cytochrome c"/>
    <property type="evidence" value="ECO:0007669"/>
    <property type="project" value="TreeGrafter"/>
</dbReference>
<dbReference type="CDD" id="cd00290">
    <property type="entry name" value="cytochrome_b_C"/>
    <property type="match status" value="1"/>
</dbReference>
<dbReference type="CDD" id="cd00284">
    <property type="entry name" value="Cytochrome_b_N"/>
    <property type="match status" value="1"/>
</dbReference>
<dbReference type="FunFam" id="1.20.810.10:FF:000002">
    <property type="entry name" value="Cytochrome b"/>
    <property type="match status" value="1"/>
</dbReference>
<dbReference type="Gene3D" id="1.20.810.10">
    <property type="entry name" value="Cytochrome Bc1 Complex, Chain C"/>
    <property type="match status" value="1"/>
</dbReference>
<dbReference type="InterPro" id="IPR005798">
    <property type="entry name" value="Cyt_b/b6_C"/>
</dbReference>
<dbReference type="InterPro" id="IPR036150">
    <property type="entry name" value="Cyt_b/b6_C_sf"/>
</dbReference>
<dbReference type="InterPro" id="IPR005797">
    <property type="entry name" value="Cyt_b/b6_N"/>
</dbReference>
<dbReference type="InterPro" id="IPR027387">
    <property type="entry name" value="Cytb/b6-like_sf"/>
</dbReference>
<dbReference type="InterPro" id="IPR030689">
    <property type="entry name" value="Cytochrome_b"/>
</dbReference>
<dbReference type="InterPro" id="IPR048260">
    <property type="entry name" value="Cytochrome_b_C_euk/bac"/>
</dbReference>
<dbReference type="InterPro" id="IPR048259">
    <property type="entry name" value="Cytochrome_b_N_euk/bac"/>
</dbReference>
<dbReference type="InterPro" id="IPR016174">
    <property type="entry name" value="Di-haem_cyt_TM"/>
</dbReference>
<dbReference type="PANTHER" id="PTHR19271">
    <property type="entry name" value="CYTOCHROME B"/>
    <property type="match status" value="1"/>
</dbReference>
<dbReference type="PANTHER" id="PTHR19271:SF16">
    <property type="entry name" value="CYTOCHROME B"/>
    <property type="match status" value="1"/>
</dbReference>
<dbReference type="Pfam" id="PF00032">
    <property type="entry name" value="Cytochrom_B_C"/>
    <property type="match status" value="1"/>
</dbReference>
<dbReference type="Pfam" id="PF00033">
    <property type="entry name" value="Cytochrome_B"/>
    <property type="match status" value="1"/>
</dbReference>
<dbReference type="PIRSF" id="PIRSF038885">
    <property type="entry name" value="COB"/>
    <property type="match status" value="1"/>
</dbReference>
<dbReference type="SUPFAM" id="SSF81648">
    <property type="entry name" value="a domain/subunit of cytochrome bc1 complex (Ubiquinol-cytochrome c reductase)"/>
    <property type="match status" value="1"/>
</dbReference>
<dbReference type="SUPFAM" id="SSF81342">
    <property type="entry name" value="Transmembrane di-heme cytochromes"/>
    <property type="match status" value="1"/>
</dbReference>
<dbReference type="PROSITE" id="PS51003">
    <property type="entry name" value="CYTB_CTER"/>
    <property type="match status" value="1"/>
</dbReference>
<dbReference type="PROSITE" id="PS51002">
    <property type="entry name" value="CYTB_NTER"/>
    <property type="match status" value="1"/>
</dbReference>
<organism>
    <name type="scientific">Myodes gapperi</name>
    <name type="common">Southern red-backed vole</name>
    <name type="synonym">Clethrionomys gapperi</name>
    <dbReference type="NCBI Taxonomy" id="473866"/>
    <lineage>
        <taxon>Eukaryota</taxon>
        <taxon>Metazoa</taxon>
        <taxon>Chordata</taxon>
        <taxon>Craniata</taxon>
        <taxon>Vertebrata</taxon>
        <taxon>Euteleostomi</taxon>
        <taxon>Mammalia</taxon>
        <taxon>Eutheria</taxon>
        <taxon>Euarchontoglires</taxon>
        <taxon>Glires</taxon>
        <taxon>Rodentia</taxon>
        <taxon>Myomorpha</taxon>
        <taxon>Muroidea</taxon>
        <taxon>Cricetidae</taxon>
        <taxon>Arvicolinae</taxon>
        <taxon>Clethrionomys</taxon>
    </lineage>
</organism>
<geneLocation type="mitochondrion"/>
<name>CYB_MYOGP</name>
<protein>
    <recommendedName>
        <fullName>Cytochrome b</fullName>
    </recommendedName>
    <alternativeName>
        <fullName>Complex III subunit 3</fullName>
    </alternativeName>
    <alternativeName>
        <fullName>Complex III subunit III</fullName>
    </alternativeName>
    <alternativeName>
        <fullName>Cytochrome b-c1 complex subunit 3</fullName>
    </alternativeName>
    <alternativeName>
        <fullName>Ubiquinol-cytochrome-c reductase complex cytochrome b subunit</fullName>
    </alternativeName>
</protein>
<reference key="1">
    <citation type="journal article" date="2001" name="Biol. Conserv.">
        <title>A phylogeographic perspective on endemism in the Alexander archipelago of the North Pacific.</title>
        <authorList>
            <person name="Cook J.A."/>
            <person name="Bidlack A.L."/>
            <person name="Conroy C.J."/>
            <person name="Demboski J.R."/>
            <person name="Fleming M.A."/>
            <person name="Runck A.M."/>
            <person name="Stone K.D."/>
            <person name="MacDonald S.O."/>
        </authorList>
    </citation>
    <scope>NUCLEOTIDE SEQUENCE [GENOMIC DNA]</scope>
    <source>
        <strain>Isolate AF 26033</strain>
        <strain>Isolate AF 2644</strain>
        <strain>Isolate AF 2780</strain>
        <strain>Isolate AF 3221</strain>
        <strain>Isolate AF 4267</strain>
        <strain>Isolate AF 4995</strain>
    </source>
</reference>
<sequence>MTIIRKKHPLIKIINHSFIDLPAPSNISSWWNFGSLLGLCLIIQILTGLFLAMHYTSDTSTAFSSVTHICRDVNYGWLIRYMHANGASMFFICLFLHVGRGMYYGSYNMIETWNMGIILLFAVMATAFMGYVLPWGQMSFWGATVITNLLSAIPYIGTTLVEWIWGGFSVDKATLTRFFAFHFILPFIITALVFVHLLFLHETGSNNPTGLNSDADKIPFHPYYTIKDFLGVLILLMGLMILVLFFPDVLGDPDNYTPANPLNTPAHIKPEWYFLFAYAILRSIPNKLGGVLALILSILVLALLPLLHTSKQRGLTFRPITQTMYWILVADLLILTWIGGQPVEYPFIIIGQMASIAYFTIIIILMPMAGMIENNILDLD</sequence>